<accession>A9KTR5</accession>
<proteinExistence type="inferred from homology"/>
<sequence>MSTNPIQPLLDVLYQGKSLSREQTAELFSALIRGEMSEAAMAGMLVALKMRGETIDEISGAADAMRAAAKPFPCPERNNNPLHNGIVDIVGTGGDGFNTINISTTAAFVAAAAGAKVAKHGNRSVSSKSGSSDLLAQFGIDLTMSPETASRCLDALNLCFLFAPHYHGGVKHAVPVRQALKTRTLFNVLGPLINPARPEFMLLGVYSPELVLPIAKVLKALGTKRAMVVHGSGLDEVALHGNTQVAELKDGDIIEYQLTPADLGVPLAQISDLEGGEPAQNALITEAILKGNGTEAHANAVAINAGCALYVCGITDSVKAGTLLALATIQSGKAFELLSQLAKVSGEAHVNGQERGR</sequence>
<keyword id="KW-0028">Amino-acid biosynthesis</keyword>
<keyword id="KW-0057">Aromatic amino acid biosynthesis</keyword>
<keyword id="KW-0328">Glycosyltransferase</keyword>
<keyword id="KW-0460">Magnesium</keyword>
<keyword id="KW-0479">Metal-binding</keyword>
<keyword id="KW-0808">Transferase</keyword>
<keyword id="KW-0822">Tryptophan biosynthesis</keyword>
<reference key="1">
    <citation type="submission" date="2007-11" db="EMBL/GenBank/DDBJ databases">
        <title>Complete sequence of chromosome of Shewanella baltica OS195.</title>
        <authorList>
            <consortium name="US DOE Joint Genome Institute"/>
            <person name="Copeland A."/>
            <person name="Lucas S."/>
            <person name="Lapidus A."/>
            <person name="Barry K."/>
            <person name="Glavina del Rio T."/>
            <person name="Dalin E."/>
            <person name="Tice H."/>
            <person name="Pitluck S."/>
            <person name="Chain P."/>
            <person name="Malfatti S."/>
            <person name="Shin M."/>
            <person name="Vergez L."/>
            <person name="Schmutz J."/>
            <person name="Larimer F."/>
            <person name="Land M."/>
            <person name="Hauser L."/>
            <person name="Kyrpides N."/>
            <person name="Kim E."/>
            <person name="Brettar I."/>
            <person name="Rodrigues J."/>
            <person name="Konstantinidis K."/>
            <person name="Klappenbach J."/>
            <person name="Hofle M."/>
            <person name="Tiedje J."/>
            <person name="Richardson P."/>
        </authorList>
    </citation>
    <scope>NUCLEOTIDE SEQUENCE [LARGE SCALE GENOMIC DNA]</scope>
    <source>
        <strain>OS195</strain>
    </source>
</reference>
<name>TRPD_SHEB9</name>
<comment type="function">
    <text evidence="1">Catalyzes the transfer of the phosphoribosyl group of 5-phosphorylribose-1-pyrophosphate (PRPP) to anthranilate to yield N-(5'-phosphoribosyl)-anthranilate (PRA).</text>
</comment>
<comment type="catalytic activity">
    <reaction evidence="1">
        <text>N-(5-phospho-beta-D-ribosyl)anthranilate + diphosphate = 5-phospho-alpha-D-ribose 1-diphosphate + anthranilate</text>
        <dbReference type="Rhea" id="RHEA:11768"/>
        <dbReference type="ChEBI" id="CHEBI:16567"/>
        <dbReference type="ChEBI" id="CHEBI:18277"/>
        <dbReference type="ChEBI" id="CHEBI:33019"/>
        <dbReference type="ChEBI" id="CHEBI:58017"/>
        <dbReference type="EC" id="2.4.2.18"/>
    </reaction>
</comment>
<comment type="cofactor">
    <cofactor evidence="1">
        <name>Mg(2+)</name>
        <dbReference type="ChEBI" id="CHEBI:18420"/>
    </cofactor>
    <text evidence="1">Binds 2 magnesium ions per monomer.</text>
</comment>
<comment type="pathway">
    <text evidence="1">Amino-acid biosynthesis; L-tryptophan biosynthesis; L-tryptophan from chorismate: step 2/5.</text>
</comment>
<comment type="subunit">
    <text evidence="1">Homodimer.</text>
</comment>
<comment type="similarity">
    <text evidence="1">Belongs to the anthranilate phosphoribosyltransferase family.</text>
</comment>
<organism>
    <name type="scientific">Shewanella baltica (strain OS195)</name>
    <dbReference type="NCBI Taxonomy" id="399599"/>
    <lineage>
        <taxon>Bacteria</taxon>
        <taxon>Pseudomonadati</taxon>
        <taxon>Pseudomonadota</taxon>
        <taxon>Gammaproteobacteria</taxon>
        <taxon>Alteromonadales</taxon>
        <taxon>Shewanellaceae</taxon>
        <taxon>Shewanella</taxon>
    </lineage>
</organism>
<evidence type="ECO:0000255" key="1">
    <source>
        <dbReference type="HAMAP-Rule" id="MF_00211"/>
    </source>
</evidence>
<feature type="chain" id="PRO_1000078027" description="Anthranilate phosphoribosyltransferase">
    <location>
        <begin position="1"/>
        <end position="357"/>
    </location>
</feature>
<feature type="binding site" evidence="1">
    <location>
        <position position="91"/>
    </location>
    <ligand>
        <name>5-phospho-alpha-D-ribose 1-diphosphate</name>
        <dbReference type="ChEBI" id="CHEBI:58017"/>
    </ligand>
</feature>
<feature type="binding site" evidence="1">
    <location>
        <position position="91"/>
    </location>
    <ligand>
        <name>anthranilate</name>
        <dbReference type="ChEBI" id="CHEBI:16567"/>
        <label>1</label>
    </ligand>
</feature>
<feature type="binding site" evidence="1">
    <location>
        <begin position="94"/>
        <end position="95"/>
    </location>
    <ligand>
        <name>5-phospho-alpha-D-ribose 1-diphosphate</name>
        <dbReference type="ChEBI" id="CHEBI:58017"/>
    </ligand>
</feature>
<feature type="binding site" evidence="1">
    <location>
        <position position="99"/>
    </location>
    <ligand>
        <name>5-phospho-alpha-D-ribose 1-diphosphate</name>
        <dbReference type="ChEBI" id="CHEBI:58017"/>
    </ligand>
</feature>
<feature type="binding site" evidence="1">
    <location>
        <begin position="101"/>
        <end position="104"/>
    </location>
    <ligand>
        <name>5-phospho-alpha-D-ribose 1-diphosphate</name>
        <dbReference type="ChEBI" id="CHEBI:58017"/>
    </ligand>
</feature>
<feature type="binding site" evidence="1">
    <location>
        <position position="103"/>
    </location>
    <ligand>
        <name>Mg(2+)</name>
        <dbReference type="ChEBI" id="CHEBI:18420"/>
        <label>1</label>
    </ligand>
</feature>
<feature type="binding site" evidence="1">
    <location>
        <begin position="119"/>
        <end position="127"/>
    </location>
    <ligand>
        <name>5-phospho-alpha-D-ribose 1-diphosphate</name>
        <dbReference type="ChEBI" id="CHEBI:58017"/>
    </ligand>
</feature>
<feature type="binding site" evidence="1">
    <location>
        <position position="122"/>
    </location>
    <ligand>
        <name>anthranilate</name>
        <dbReference type="ChEBI" id="CHEBI:16567"/>
        <label>1</label>
    </ligand>
</feature>
<feature type="binding site" evidence="1">
    <location>
        <position position="131"/>
    </location>
    <ligand>
        <name>5-phospho-alpha-D-ribose 1-diphosphate</name>
        <dbReference type="ChEBI" id="CHEBI:58017"/>
    </ligand>
</feature>
<feature type="binding site" evidence="1">
    <location>
        <position position="177"/>
    </location>
    <ligand>
        <name>anthranilate</name>
        <dbReference type="ChEBI" id="CHEBI:16567"/>
        <label>2</label>
    </ligand>
</feature>
<feature type="binding site" evidence="1">
    <location>
        <position position="235"/>
    </location>
    <ligand>
        <name>Mg(2+)</name>
        <dbReference type="ChEBI" id="CHEBI:18420"/>
        <label>2</label>
    </ligand>
</feature>
<feature type="binding site" evidence="1">
    <location>
        <position position="236"/>
    </location>
    <ligand>
        <name>Mg(2+)</name>
        <dbReference type="ChEBI" id="CHEBI:18420"/>
        <label>1</label>
    </ligand>
</feature>
<feature type="binding site" evidence="1">
    <location>
        <position position="236"/>
    </location>
    <ligand>
        <name>Mg(2+)</name>
        <dbReference type="ChEBI" id="CHEBI:18420"/>
        <label>2</label>
    </ligand>
</feature>
<dbReference type="EC" id="2.4.2.18" evidence="1"/>
<dbReference type="EMBL" id="CP000891">
    <property type="protein sequence ID" value="ABX49970.1"/>
    <property type="molecule type" value="Genomic_DNA"/>
</dbReference>
<dbReference type="RefSeq" id="WP_006085430.1">
    <property type="nucleotide sequence ID" value="NC_009997.1"/>
</dbReference>
<dbReference type="SMR" id="A9KTR5"/>
<dbReference type="GeneID" id="11772893"/>
<dbReference type="KEGG" id="sbn:Sbal195_2803"/>
<dbReference type="HOGENOM" id="CLU_034315_2_1_6"/>
<dbReference type="UniPathway" id="UPA00035">
    <property type="reaction ID" value="UER00041"/>
</dbReference>
<dbReference type="Proteomes" id="UP000000770">
    <property type="component" value="Chromosome"/>
</dbReference>
<dbReference type="GO" id="GO:0005829">
    <property type="term" value="C:cytosol"/>
    <property type="evidence" value="ECO:0007669"/>
    <property type="project" value="TreeGrafter"/>
</dbReference>
<dbReference type="GO" id="GO:0004048">
    <property type="term" value="F:anthranilate phosphoribosyltransferase activity"/>
    <property type="evidence" value="ECO:0007669"/>
    <property type="project" value="UniProtKB-UniRule"/>
</dbReference>
<dbReference type="GO" id="GO:0000287">
    <property type="term" value="F:magnesium ion binding"/>
    <property type="evidence" value="ECO:0007669"/>
    <property type="project" value="UniProtKB-UniRule"/>
</dbReference>
<dbReference type="GO" id="GO:0000162">
    <property type="term" value="P:L-tryptophan biosynthetic process"/>
    <property type="evidence" value="ECO:0007669"/>
    <property type="project" value="UniProtKB-UniRule"/>
</dbReference>
<dbReference type="FunFam" id="3.40.1030.10:FF:000002">
    <property type="entry name" value="Anthranilate phosphoribosyltransferase"/>
    <property type="match status" value="1"/>
</dbReference>
<dbReference type="Gene3D" id="3.40.1030.10">
    <property type="entry name" value="Nucleoside phosphorylase/phosphoribosyltransferase catalytic domain"/>
    <property type="match status" value="1"/>
</dbReference>
<dbReference type="Gene3D" id="1.20.970.10">
    <property type="entry name" value="Transferase, Pyrimidine Nucleoside Phosphorylase, Chain C"/>
    <property type="match status" value="1"/>
</dbReference>
<dbReference type="HAMAP" id="MF_00211">
    <property type="entry name" value="TrpD"/>
    <property type="match status" value="1"/>
</dbReference>
<dbReference type="InterPro" id="IPR005940">
    <property type="entry name" value="Anthranilate_Pribosyl_Tfrase"/>
</dbReference>
<dbReference type="InterPro" id="IPR000312">
    <property type="entry name" value="Glycosyl_Trfase_fam3"/>
</dbReference>
<dbReference type="InterPro" id="IPR017459">
    <property type="entry name" value="Glycosyl_Trfase_fam3_N_dom"/>
</dbReference>
<dbReference type="InterPro" id="IPR036320">
    <property type="entry name" value="Glycosyl_Trfase_fam3_N_dom_sf"/>
</dbReference>
<dbReference type="InterPro" id="IPR035902">
    <property type="entry name" value="Nuc_phospho_transferase"/>
</dbReference>
<dbReference type="NCBIfam" id="TIGR01245">
    <property type="entry name" value="trpD"/>
    <property type="match status" value="1"/>
</dbReference>
<dbReference type="PANTHER" id="PTHR43285">
    <property type="entry name" value="ANTHRANILATE PHOSPHORIBOSYLTRANSFERASE"/>
    <property type="match status" value="1"/>
</dbReference>
<dbReference type="PANTHER" id="PTHR43285:SF2">
    <property type="entry name" value="ANTHRANILATE PHOSPHORIBOSYLTRANSFERASE"/>
    <property type="match status" value="1"/>
</dbReference>
<dbReference type="Pfam" id="PF02885">
    <property type="entry name" value="Glycos_trans_3N"/>
    <property type="match status" value="1"/>
</dbReference>
<dbReference type="Pfam" id="PF00591">
    <property type="entry name" value="Glycos_transf_3"/>
    <property type="match status" value="1"/>
</dbReference>
<dbReference type="SUPFAM" id="SSF52418">
    <property type="entry name" value="Nucleoside phosphorylase/phosphoribosyltransferase catalytic domain"/>
    <property type="match status" value="1"/>
</dbReference>
<dbReference type="SUPFAM" id="SSF47648">
    <property type="entry name" value="Nucleoside phosphorylase/phosphoribosyltransferase N-terminal domain"/>
    <property type="match status" value="1"/>
</dbReference>
<protein>
    <recommendedName>
        <fullName evidence="1">Anthranilate phosphoribosyltransferase</fullName>
        <ecNumber evidence="1">2.4.2.18</ecNumber>
    </recommendedName>
</protein>
<gene>
    <name evidence="1" type="primary">trpD</name>
    <name type="ordered locus">Sbal195_2803</name>
</gene>